<feature type="chain" id="PRO_0000146473" description="Small ribosomal subunit protein uS12">
    <location>
        <begin position="1"/>
        <end position="142"/>
    </location>
</feature>
<feature type="region of interest" description="Disordered" evidence="2">
    <location>
        <begin position="1"/>
        <end position="30"/>
    </location>
</feature>
<feature type="compositionally biased region" description="Basic residues" evidence="2">
    <location>
        <begin position="11"/>
        <end position="20"/>
    </location>
</feature>
<feature type="compositionally biased region" description="Basic and acidic residues" evidence="2">
    <location>
        <begin position="21"/>
        <end position="30"/>
    </location>
</feature>
<feature type="modified residue" description="Hydroxyproline" evidence="1">
    <location>
        <position position="61"/>
    </location>
</feature>
<evidence type="ECO:0000250" key="1"/>
<evidence type="ECO:0000256" key="2">
    <source>
        <dbReference type="SAM" id="MobiDB-lite"/>
    </source>
</evidence>
<evidence type="ECO:0000305" key="3"/>
<protein>
    <recommendedName>
        <fullName evidence="3">Small ribosomal subunit protein uS12</fullName>
    </recommendedName>
    <alternativeName>
        <fullName>40S ribosomal protein S23</fullName>
    </alternativeName>
</protein>
<organism>
    <name type="scientific">Euphorbia esula</name>
    <name type="common">Leafy spurge</name>
    <dbReference type="NCBI Taxonomy" id="3993"/>
    <lineage>
        <taxon>Eukaryota</taxon>
        <taxon>Viridiplantae</taxon>
        <taxon>Streptophyta</taxon>
        <taxon>Embryophyta</taxon>
        <taxon>Tracheophyta</taxon>
        <taxon>Spermatophyta</taxon>
        <taxon>Magnoliopsida</taxon>
        <taxon>eudicotyledons</taxon>
        <taxon>Gunneridae</taxon>
        <taxon>Pentapetalae</taxon>
        <taxon>rosids</taxon>
        <taxon>fabids</taxon>
        <taxon>Malpighiales</taxon>
        <taxon>Euphorbiaceae</taxon>
        <taxon>Euphorbioideae</taxon>
        <taxon>Euphorbieae</taxon>
        <taxon>Euphorbia</taxon>
        <taxon>Euphorbia subgen. Esula</taxon>
        <taxon>Euphorbia sect. Esula</taxon>
    </lineage>
</organism>
<reference key="1">
    <citation type="submission" date="2000-01" db="EMBL/GenBank/DDBJ databases">
        <title>Identification of mRNAs expressed in underground adventitious buds of Euphorbia esula (leafy spurge).</title>
        <authorList>
            <person name="Anderson J.V."/>
            <person name="Horvath D.P."/>
        </authorList>
    </citation>
    <scope>NUCLEOTIDE SEQUENCE [MRNA]</scope>
</reference>
<sequence length="142" mass="15674">MGKTHGMGAARKLKSHRRTQRWADKSYKKSHLGNEWKKPFAGSSHAKGIVLEKIGIEAKQPNSAIRKCARVQLIKNGKKIAAFVPNDGCLNYIEENDEVLIAGFGRKGHAVGDIPGVRFKVVKVSGVSLLALFKEKKEKPRS</sequence>
<dbReference type="EMBL" id="AF220539">
    <property type="protein sequence ID" value="AAF26742.1"/>
    <property type="molecule type" value="mRNA"/>
</dbReference>
<dbReference type="SMR" id="Q9M5Z9"/>
<dbReference type="GO" id="GO:0015935">
    <property type="term" value="C:small ribosomal subunit"/>
    <property type="evidence" value="ECO:0007669"/>
    <property type="project" value="InterPro"/>
</dbReference>
<dbReference type="GO" id="GO:0003735">
    <property type="term" value="F:structural constituent of ribosome"/>
    <property type="evidence" value="ECO:0007669"/>
    <property type="project" value="InterPro"/>
</dbReference>
<dbReference type="GO" id="GO:0006412">
    <property type="term" value="P:translation"/>
    <property type="evidence" value="ECO:0007669"/>
    <property type="project" value="InterPro"/>
</dbReference>
<dbReference type="CDD" id="cd03367">
    <property type="entry name" value="Ribosomal_S23"/>
    <property type="match status" value="1"/>
</dbReference>
<dbReference type="FunFam" id="2.40.50.140:FF:000007">
    <property type="entry name" value="40S ribosomal protein S23"/>
    <property type="match status" value="1"/>
</dbReference>
<dbReference type="Gene3D" id="2.40.50.140">
    <property type="entry name" value="Nucleic acid-binding proteins"/>
    <property type="match status" value="1"/>
</dbReference>
<dbReference type="InterPro" id="IPR012340">
    <property type="entry name" value="NA-bd_OB-fold"/>
</dbReference>
<dbReference type="InterPro" id="IPR006032">
    <property type="entry name" value="Ribosomal_uS12"/>
</dbReference>
<dbReference type="InterPro" id="IPR005680">
    <property type="entry name" value="Ribosomal_uS12_euk/arc"/>
</dbReference>
<dbReference type="NCBIfam" id="TIGR00982">
    <property type="entry name" value="uS12_E_A"/>
    <property type="match status" value="1"/>
</dbReference>
<dbReference type="PANTHER" id="PTHR11652">
    <property type="entry name" value="30S RIBOSOMAL PROTEIN S12 FAMILY MEMBER"/>
    <property type="match status" value="1"/>
</dbReference>
<dbReference type="Pfam" id="PF00164">
    <property type="entry name" value="Ribosom_S12_S23"/>
    <property type="match status" value="1"/>
</dbReference>
<dbReference type="PIRSF" id="PIRSF002133">
    <property type="entry name" value="Ribosomal_S12/S23"/>
    <property type="match status" value="1"/>
</dbReference>
<dbReference type="SUPFAM" id="SSF50249">
    <property type="entry name" value="Nucleic acid-binding proteins"/>
    <property type="match status" value="1"/>
</dbReference>
<dbReference type="PROSITE" id="PS00055">
    <property type="entry name" value="RIBOSOMAL_S12"/>
    <property type="match status" value="1"/>
</dbReference>
<proteinExistence type="evidence at transcript level"/>
<name>RS23_EUPES</name>
<comment type="similarity">
    <text evidence="3">Belongs to the universal ribosomal protein uS12 family.</text>
</comment>
<accession>Q9M5Z9</accession>
<gene>
    <name type="primary">RPS23</name>
</gene>
<keyword id="KW-0379">Hydroxylation</keyword>
<keyword id="KW-0687">Ribonucleoprotein</keyword>
<keyword id="KW-0689">Ribosomal protein</keyword>